<keyword id="KW-0010">Activator</keyword>
<keyword id="KW-0235">DNA replication</keyword>
<keyword id="KW-0238">DNA-binding</keyword>
<keyword id="KW-0244">Early protein</keyword>
<keyword id="KW-1048">Host nucleus</keyword>
<keyword id="KW-0597">Phosphoprotein</keyword>
<keyword id="KW-0678">Repressor</keyword>
<keyword id="KW-0804">Transcription</keyword>
<keyword id="KW-0805">Transcription regulation</keyword>
<gene>
    <name evidence="1" type="primary">E2</name>
</gene>
<proteinExistence type="inferred from homology"/>
<protein>
    <recommendedName>
        <fullName evidence="1">Regulatory protein E2</fullName>
    </recommendedName>
</protein>
<organism>
    <name type="scientific">Human papillomavirus type 6b</name>
    <dbReference type="NCBI Taxonomy" id="10600"/>
    <lineage>
        <taxon>Viruses</taxon>
        <taxon>Monodnaviria</taxon>
        <taxon>Shotokuvirae</taxon>
        <taxon>Cossaviricota</taxon>
        <taxon>Papovaviricetes</taxon>
        <taxon>Zurhausenvirales</taxon>
        <taxon>Papillomaviridae</taxon>
        <taxon>Firstpapillomavirinae</taxon>
        <taxon>Alphapapillomavirus</taxon>
        <taxon>Alphapapillomavirus 10</taxon>
    </lineage>
</organism>
<comment type="function">
    <text evidence="1">Plays a role in the initiation of viral DNA replication. A dimer of E2 interacts with a dimer of E1 in order to improve specificity of E1 DNA binding activity. Once the complex recognizes and binds DNA at specific sites, the E2 dimer is removed from DNA. E2 also regulates viral transcription through binding to the E2RE response element (5'-ACCNNNNNNGGT-3') present in multiple copies in the regulatory regions of the viral genome. Activates or represses transcription depending on E2RE's position with regards to proximal promoter elements including the TATA-box. Repression occurs by sterically hindering the assembly of the transcription initiation complex.</text>
</comment>
<comment type="subunit">
    <text evidence="1">Binds DNA as homodimer. Interacts with protein E1; this interaction greatly increases E1 DNA-binding activity. Interacts with protein L1; this interaction enhances E2-dependent replication and transcription activation. Interacts with protein L2; this interaction inhibits E2 transcriptional activity but not DNA replication function E2. Interacts with protein E7; this interaction inhibits E7 oncogenic activity. Interacts with host TAF1; this interaction modulates E2-dependent transcriptional regulation. Interacts with host BRD4; this interaction mediates E2 transcriptional activation function. Additionally, the interaction with host BRD4 on mitotic chromosomes mediates tethering of the viral genome. Interacts with host TOPBP1; this interaction is required for optimal viral DNA replication.</text>
</comment>
<comment type="subcellular location">
    <subcellularLocation>
        <location evidence="1">Host nucleus</location>
    </subcellularLocation>
</comment>
<comment type="PTM">
    <text evidence="1">Phosphorylated.</text>
</comment>
<comment type="similarity">
    <text evidence="1">Belongs to the papillomaviridae E2 protein family.</text>
</comment>
<feature type="chain" id="PRO_0000133185" description="Regulatory protein E2">
    <location>
        <begin position="1"/>
        <end position="368"/>
    </location>
</feature>
<feature type="region of interest" description="Transactivation domain" evidence="1">
    <location>
        <begin position="1"/>
        <end position="200"/>
    </location>
</feature>
<feature type="region of interest" description="Disordered" evidence="2">
    <location>
        <begin position="208"/>
        <end position="241"/>
    </location>
</feature>
<feature type="region of interest" description="DNA-binding domain" evidence="1">
    <location>
        <begin position="284"/>
        <end position="368"/>
    </location>
</feature>
<feature type="compositionally biased region" description="Polar residues" evidence="2">
    <location>
        <begin position="208"/>
        <end position="226"/>
    </location>
</feature>
<name>VE2_HPV6B</name>
<evidence type="ECO:0000255" key="1">
    <source>
        <dbReference type="HAMAP-Rule" id="MF_04001"/>
    </source>
</evidence>
<evidence type="ECO:0000256" key="2">
    <source>
        <dbReference type="SAM" id="MobiDB-lite"/>
    </source>
</evidence>
<organismHost>
    <name type="scientific">Homo sapiens</name>
    <name type="common">Human</name>
    <dbReference type="NCBI Taxonomy" id="9606"/>
</organismHost>
<reference key="1">
    <citation type="journal article" date="1983" name="EMBO J.">
        <title>DNA sequence and genome organization of genital human papillomavirus type 6b.</title>
        <authorList>
            <person name="Schwarz E."/>
            <person name="Durst M."/>
            <person name="Demankowski C."/>
            <person name="Lattermann O."/>
            <person name="Zech R."/>
            <person name="Wolfsperger E."/>
            <person name="Suhai S."/>
            <person name="zur Hausen H."/>
        </authorList>
    </citation>
    <scope>NUCLEOTIDE SEQUENCE [GENOMIC DNA]</scope>
</reference>
<accession>P03119</accession>
<dbReference type="EMBL" id="X00203">
    <property type="protein sequence ID" value="CAA25021.1"/>
    <property type="molecule type" value="Genomic_DNA"/>
</dbReference>
<dbReference type="PIR" id="A03667">
    <property type="entry name" value="W2WL6"/>
</dbReference>
<dbReference type="RefSeq" id="NP_040299.1">
    <property type="nucleotide sequence ID" value="NC_001355.1"/>
</dbReference>
<dbReference type="SMR" id="P03119"/>
<dbReference type="BioGRID" id="3509158">
    <property type="interactions" value="18"/>
</dbReference>
<dbReference type="MINT" id="P03119"/>
<dbReference type="DNASU" id="1489364"/>
<dbReference type="GeneID" id="1489364"/>
<dbReference type="KEGG" id="vg:1489364"/>
<dbReference type="OrthoDB" id="15886at10239"/>
<dbReference type="Proteomes" id="UP000007676">
    <property type="component" value="Genome"/>
</dbReference>
<dbReference type="GO" id="GO:0042025">
    <property type="term" value="C:host cell nucleus"/>
    <property type="evidence" value="ECO:0007669"/>
    <property type="project" value="UniProtKB-SubCell"/>
</dbReference>
<dbReference type="GO" id="GO:0003677">
    <property type="term" value="F:DNA binding"/>
    <property type="evidence" value="ECO:0007669"/>
    <property type="project" value="UniProtKB-UniRule"/>
</dbReference>
<dbReference type="GO" id="GO:0003700">
    <property type="term" value="F:DNA-binding transcription factor activity"/>
    <property type="evidence" value="ECO:0007669"/>
    <property type="project" value="UniProtKB-UniRule"/>
</dbReference>
<dbReference type="GO" id="GO:0000166">
    <property type="term" value="F:nucleotide binding"/>
    <property type="evidence" value="ECO:0007669"/>
    <property type="project" value="UniProtKB-UniRule"/>
</dbReference>
<dbReference type="GO" id="GO:0006260">
    <property type="term" value="P:DNA replication"/>
    <property type="evidence" value="ECO:0007669"/>
    <property type="project" value="UniProtKB-KW"/>
</dbReference>
<dbReference type="GO" id="GO:0006351">
    <property type="term" value="P:DNA-templated transcription"/>
    <property type="evidence" value="ECO:0007669"/>
    <property type="project" value="UniProtKB-UniRule"/>
</dbReference>
<dbReference type="GO" id="GO:0006275">
    <property type="term" value="P:regulation of DNA replication"/>
    <property type="evidence" value="ECO:0007669"/>
    <property type="project" value="UniProtKB-UniRule"/>
</dbReference>
<dbReference type="GO" id="GO:0039693">
    <property type="term" value="P:viral DNA genome replication"/>
    <property type="evidence" value="ECO:0007669"/>
    <property type="project" value="UniProtKB-UniRule"/>
</dbReference>
<dbReference type="FunFam" id="3.30.70.330:FF:000918">
    <property type="entry name" value="Regulatory protein E2"/>
    <property type="match status" value="1"/>
</dbReference>
<dbReference type="Gene3D" id="3.30.70.330">
    <property type="match status" value="1"/>
</dbReference>
<dbReference type="Gene3D" id="1.10.287.30">
    <property type="entry name" value="E2 (early) protein, N terminal domain, subdomain 1"/>
    <property type="match status" value="1"/>
</dbReference>
<dbReference type="Gene3D" id="2.170.200.10">
    <property type="entry name" value="Papillomavirus E2 early protein domain"/>
    <property type="match status" value="1"/>
</dbReference>
<dbReference type="HAMAP" id="MF_04001">
    <property type="entry name" value="PPV_E2"/>
    <property type="match status" value="1"/>
</dbReference>
<dbReference type="InterPro" id="IPR035975">
    <property type="entry name" value="E2/EBNA1_C_sf"/>
</dbReference>
<dbReference type="InterPro" id="IPR012677">
    <property type="entry name" value="Nucleotide-bd_a/b_plait_sf"/>
</dbReference>
<dbReference type="InterPro" id="IPR000427">
    <property type="entry name" value="Papillomavirus_E2_C"/>
</dbReference>
<dbReference type="InterPro" id="IPR001866">
    <property type="entry name" value="PPV_E2_N"/>
</dbReference>
<dbReference type="InterPro" id="IPR033668">
    <property type="entry name" value="Reg_prot_E2"/>
</dbReference>
<dbReference type="InterPro" id="IPR036050">
    <property type="entry name" value="Regulatory_protein_E2_N"/>
</dbReference>
<dbReference type="InterPro" id="IPR042503">
    <property type="entry name" value="Regulatory_protein_E2_N_1"/>
</dbReference>
<dbReference type="InterPro" id="IPR042504">
    <property type="entry name" value="Regulatory_protein_E2_N_2"/>
</dbReference>
<dbReference type="Pfam" id="PF00511">
    <property type="entry name" value="PPV_E2_C"/>
    <property type="match status" value="1"/>
</dbReference>
<dbReference type="Pfam" id="PF00508">
    <property type="entry name" value="PPV_E2_N"/>
    <property type="match status" value="1"/>
</dbReference>
<dbReference type="SUPFAM" id="SSF51332">
    <property type="entry name" value="E2 regulatory, transactivation domain"/>
    <property type="match status" value="1"/>
</dbReference>
<dbReference type="SUPFAM" id="SSF54957">
    <property type="entry name" value="Viral DNA-binding domain"/>
    <property type="match status" value="1"/>
</dbReference>
<sequence length="368" mass="42155">MEAIAKRLDACQEQLLELYEENSTDLHKHVLHWKCMRHESVLLYKAKQMGLSHIGMQVVPPLKVSEAKGHNAIEMQMHLESLLRTEYSMEPWTLQETSYEMWQTPPKRCFKKRGKTVEVKFDGCANNTMDYVVWTDVYVQDNDTWVKVHSMVDAKGIYYTCGQFKTYYVNFVKEAEKYGSTKHWEVCYGSTVICSPASVSSTTQEVSIPESTTYTPAQTSTLVSSSTKEDAVQTPPRKRARGVQQSPCNALCVAHIGPVDSGNHNLITNNHDQHQRRNNSNSSATPIVQFQGESNCLKCFRYRLNDRHRHLFDLISSTWHWASSKAPHKHAIVTVTYDSEEQRQQFLDVVKIPPTISHKLGFMSLHLL</sequence>